<organism>
    <name type="scientific">Danio rerio</name>
    <name type="common">Zebrafish</name>
    <name type="synonym">Brachydanio rerio</name>
    <dbReference type="NCBI Taxonomy" id="7955"/>
    <lineage>
        <taxon>Eukaryota</taxon>
        <taxon>Metazoa</taxon>
        <taxon>Chordata</taxon>
        <taxon>Craniata</taxon>
        <taxon>Vertebrata</taxon>
        <taxon>Euteleostomi</taxon>
        <taxon>Actinopterygii</taxon>
        <taxon>Neopterygii</taxon>
        <taxon>Teleostei</taxon>
        <taxon>Ostariophysi</taxon>
        <taxon>Cypriniformes</taxon>
        <taxon>Danionidae</taxon>
        <taxon>Danioninae</taxon>
        <taxon>Danio</taxon>
    </lineage>
</organism>
<feature type="initiator methionine" description="Removed" evidence="2">
    <location>
        <position position="1"/>
    </location>
</feature>
<feature type="chain" id="PRO_0000448488" description="RNA-binding protein 7">
    <location>
        <begin position="2"/>
        <end position="252"/>
    </location>
</feature>
<feature type="domain" description="RRM" evidence="3">
    <location>
        <begin position="9"/>
        <end position="86"/>
    </location>
</feature>
<feature type="region of interest" description="Disordered" evidence="4">
    <location>
        <begin position="88"/>
        <end position="137"/>
    </location>
</feature>
<feature type="region of interest" description="Disordered" evidence="4">
    <location>
        <begin position="171"/>
        <end position="252"/>
    </location>
</feature>
<feature type="compositionally biased region" description="Polar residues" evidence="4">
    <location>
        <begin position="88"/>
        <end position="107"/>
    </location>
</feature>
<feature type="compositionally biased region" description="Polar residues" evidence="4">
    <location>
        <begin position="119"/>
        <end position="137"/>
    </location>
</feature>
<feature type="compositionally biased region" description="Basic and acidic residues" evidence="4">
    <location>
        <begin position="211"/>
        <end position="230"/>
    </location>
</feature>
<feature type="compositionally biased region" description="Basic and acidic residues" evidence="4">
    <location>
        <begin position="237"/>
        <end position="252"/>
    </location>
</feature>
<sequence>MGIADEADRTLFVGNLDPQVTEEVIFELFLQAGPLIKVKIPKDNEGKSKLFAFVNFKHEVSVPYALNLLNGIRLHGRQLNIKFKTGSSHINQEGKSPANSQNPSPANTPGHRGGRTPEQMGSPSYSPPQHMQRPFSSPDTLQRQAMMNNMWQVQMQQLQMLSGTFQQGMQQLRGNADGGWSGHRGQRHSPQDNNNHQGRDQRHGNGANNYERNRRDGQRGDFYHHDDRSGGHNRNYPPDRRRDSREGRWKHF</sequence>
<accession>Q6P0F4</accession>
<gene>
    <name evidence="2" type="primary">rbm7</name>
    <name type="ORF">zgc:77304</name>
</gene>
<protein>
    <recommendedName>
        <fullName evidence="2">RNA-binding protein 7</fullName>
    </recommendedName>
    <alternativeName>
        <fullName evidence="2">RNA-binding motif protein 7</fullName>
    </alternativeName>
</protein>
<dbReference type="EMBL" id="CU633933">
    <property type="status" value="NOT_ANNOTATED_CDS"/>
    <property type="molecule type" value="Genomic_DNA"/>
</dbReference>
<dbReference type="EMBL" id="BC065641">
    <property type="protein sequence ID" value="AAH65641.1"/>
    <property type="molecule type" value="mRNA"/>
</dbReference>
<dbReference type="SMR" id="Q6P0F4"/>
<dbReference type="FunCoup" id="Q6P0F4">
    <property type="interactions" value="1363"/>
</dbReference>
<dbReference type="STRING" id="7955.ENSDARP00000007431"/>
<dbReference type="PaxDb" id="7955-ENSDARP00000007431"/>
<dbReference type="Ensembl" id="ENSDART00000009775">
    <property type="protein sequence ID" value="ENSDARP00000007431"/>
    <property type="gene ID" value="ENSDARG00000020841"/>
</dbReference>
<dbReference type="AGR" id="ZFIN:ZDB-GENE-030131-6724"/>
<dbReference type="ZFIN" id="ZDB-GENE-030131-6724">
    <property type="gene designation" value="rbm7"/>
</dbReference>
<dbReference type="eggNOG" id="KOG4454">
    <property type="taxonomic scope" value="Eukaryota"/>
</dbReference>
<dbReference type="HOGENOM" id="CLU_087967_0_0_1"/>
<dbReference type="InParanoid" id="Q6P0F4"/>
<dbReference type="OMA" id="NLQKHAM"/>
<dbReference type="PhylomeDB" id="Q6P0F4"/>
<dbReference type="TreeFam" id="TF323596"/>
<dbReference type="PRO" id="PR:Q6P0F4"/>
<dbReference type="Proteomes" id="UP000000437">
    <property type="component" value="Unplaced"/>
</dbReference>
<dbReference type="Bgee" id="ENSDARG00000020841">
    <property type="expression patterns" value="Expressed in cleaving embryo and 27 other cell types or tissues"/>
</dbReference>
<dbReference type="GO" id="GO:0005654">
    <property type="term" value="C:nucleoplasm"/>
    <property type="evidence" value="ECO:0007669"/>
    <property type="project" value="UniProtKB-SubCell"/>
</dbReference>
<dbReference type="GO" id="GO:0005634">
    <property type="term" value="C:nucleus"/>
    <property type="evidence" value="ECO:0000318"/>
    <property type="project" value="GO_Central"/>
</dbReference>
<dbReference type="GO" id="GO:0003723">
    <property type="term" value="F:RNA binding"/>
    <property type="evidence" value="ECO:0000250"/>
    <property type="project" value="UniProtKB"/>
</dbReference>
<dbReference type="GO" id="GO:0003727">
    <property type="term" value="F:single-stranded RNA binding"/>
    <property type="evidence" value="ECO:0000318"/>
    <property type="project" value="GO_Central"/>
</dbReference>
<dbReference type="GO" id="GO:0007409">
    <property type="term" value="P:axonogenesis"/>
    <property type="evidence" value="ECO:0000315"/>
    <property type="project" value="ZFIN"/>
</dbReference>
<dbReference type="GO" id="GO:0021693">
    <property type="term" value="P:cerebellar Purkinje cell layer structural organization"/>
    <property type="evidence" value="ECO:0000315"/>
    <property type="project" value="ZFIN"/>
</dbReference>
<dbReference type="GO" id="GO:0000381">
    <property type="term" value="P:regulation of alternative mRNA splicing, via spliceosome"/>
    <property type="evidence" value="ECO:0000318"/>
    <property type="project" value="GO_Central"/>
</dbReference>
<dbReference type="CDD" id="cd12592">
    <property type="entry name" value="RRM_RBM7"/>
    <property type="match status" value="1"/>
</dbReference>
<dbReference type="FunFam" id="3.30.70.330:FF:001300">
    <property type="entry name" value="RNA-binding motif protein 7"/>
    <property type="match status" value="1"/>
</dbReference>
<dbReference type="Gene3D" id="3.30.70.330">
    <property type="match status" value="1"/>
</dbReference>
<dbReference type="InterPro" id="IPR052285">
    <property type="entry name" value="NEXT_complex_subunit"/>
</dbReference>
<dbReference type="InterPro" id="IPR012677">
    <property type="entry name" value="Nucleotide-bd_a/b_plait_sf"/>
</dbReference>
<dbReference type="InterPro" id="IPR035979">
    <property type="entry name" value="RBD_domain_sf"/>
</dbReference>
<dbReference type="InterPro" id="IPR034500">
    <property type="entry name" value="RBM7_RRM"/>
</dbReference>
<dbReference type="InterPro" id="IPR000504">
    <property type="entry name" value="RRM_dom"/>
</dbReference>
<dbReference type="PANTHER" id="PTHR13798">
    <property type="entry name" value="RNA BINDING MOTIF RBM PROTEIN -RELATED"/>
    <property type="match status" value="1"/>
</dbReference>
<dbReference type="PANTHER" id="PTHR13798:SF11">
    <property type="entry name" value="RNA-BINDING PROTEIN 7-RELATED"/>
    <property type="match status" value="1"/>
</dbReference>
<dbReference type="Pfam" id="PF00076">
    <property type="entry name" value="RRM_1"/>
    <property type="match status" value="1"/>
</dbReference>
<dbReference type="SMART" id="SM00360">
    <property type="entry name" value="RRM"/>
    <property type="match status" value="1"/>
</dbReference>
<dbReference type="SUPFAM" id="SSF54928">
    <property type="entry name" value="RNA-binding domain, RBD"/>
    <property type="match status" value="1"/>
</dbReference>
<dbReference type="PROSITE" id="PS50102">
    <property type="entry name" value="RRM"/>
    <property type="match status" value="1"/>
</dbReference>
<reference key="1">
    <citation type="journal article" date="2013" name="Nature">
        <title>The zebrafish reference genome sequence and its relationship to the human genome.</title>
        <authorList>
            <person name="Howe K."/>
            <person name="Clark M.D."/>
            <person name="Torroja C.F."/>
            <person name="Torrance J."/>
            <person name="Berthelot C."/>
            <person name="Muffato M."/>
            <person name="Collins J.E."/>
            <person name="Humphray S."/>
            <person name="McLaren K."/>
            <person name="Matthews L."/>
            <person name="McLaren S."/>
            <person name="Sealy I."/>
            <person name="Caccamo M."/>
            <person name="Churcher C."/>
            <person name="Scott C."/>
            <person name="Barrett J.C."/>
            <person name="Koch R."/>
            <person name="Rauch G.J."/>
            <person name="White S."/>
            <person name="Chow W."/>
            <person name="Kilian B."/>
            <person name="Quintais L.T."/>
            <person name="Guerra-Assuncao J.A."/>
            <person name="Zhou Y."/>
            <person name="Gu Y."/>
            <person name="Yen J."/>
            <person name="Vogel J.H."/>
            <person name="Eyre T."/>
            <person name="Redmond S."/>
            <person name="Banerjee R."/>
            <person name="Chi J."/>
            <person name="Fu B."/>
            <person name="Langley E."/>
            <person name="Maguire S.F."/>
            <person name="Laird G.K."/>
            <person name="Lloyd D."/>
            <person name="Kenyon E."/>
            <person name="Donaldson S."/>
            <person name="Sehra H."/>
            <person name="Almeida-King J."/>
            <person name="Loveland J."/>
            <person name="Trevanion S."/>
            <person name="Jones M."/>
            <person name="Quail M."/>
            <person name="Willey D."/>
            <person name="Hunt A."/>
            <person name="Burton J."/>
            <person name="Sims S."/>
            <person name="McLay K."/>
            <person name="Plumb B."/>
            <person name="Davis J."/>
            <person name="Clee C."/>
            <person name="Oliver K."/>
            <person name="Clark R."/>
            <person name="Riddle C."/>
            <person name="Elliot D."/>
            <person name="Threadgold G."/>
            <person name="Harden G."/>
            <person name="Ware D."/>
            <person name="Begum S."/>
            <person name="Mortimore B."/>
            <person name="Kerry G."/>
            <person name="Heath P."/>
            <person name="Phillimore B."/>
            <person name="Tracey A."/>
            <person name="Corby N."/>
            <person name="Dunn M."/>
            <person name="Johnson C."/>
            <person name="Wood J."/>
            <person name="Clark S."/>
            <person name="Pelan S."/>
            <person name="Griffiths G."/>
            <person name="Smith M."/>
            <person name="Glithero R."/>
            <person name="Howden P."/>
            <person name="Barker N."/>
            <person name="Lloyd C."/>
            <person name="Stevens C."/>
            <person name="Harley J."/>
            <person name="Holt K."/>
            <person name="Panagiotidis G."/>
            <person name="Lovell J."/>
            <person name="Beasley H."/>
            <person name="Henderson C."/>
            <person name="Gordon D."/>
            <person name="Auger K."/>
            <person name="Wright D."/>
            <person name="Collins J."/>
            <person name="Raisen C."/>
            <person name="Dyer L."/>
            <person name="Leung K."/>
            <person name="Robertson L."/>
            <person name="Ambridge K."/>
            <person name="Leongamornlert D."/>
            <person name="McGuire S."/>
            <person name="Gilderthorp R."/>
            <person name="Griffiths C."/>
            <person name="Manthravadi D."/>
            <person name="Nichol S."/>
            <person name="Barker G."/>
            <person name="Whitehead S."/>
            <person name="Kay M."/>
            <person name="Brown J."/>
            <person name="Murnane C."/>
            <person name="Gray E."/>
            <person name="Humphries M."/>
            <person name="Sycamore N."/>
            <person name="Barker D."/>
            <person name="Saunders D."/>
            <person name="Wallis J."/>
            <person name="Babbage A."/>
            <person name="Hammond S."/>
            <person name="Mashreghi-Mohammadi M."/>
            <person name="Barr L."/>
            <person name="Martin S."/>
            <person name="Wray P."/>
            <person name="Ellington A."/>
            <person name="Matthews N."/>
            <person name="Ellwood M."/>
            <person name="Woodmansey R."/>
            <person name="Clark G."/>
            <person name="Cooper J."/>
            <person name="Tromans A."/>
            <person name="Grafham D."/>
            <person name="Skuce C."/>
            <person name="Pandian R."/>
            <person name="Andrews R."/>
            <person name="Harrison E."/>
            <person name="Kimberley A."/>
            <person name="Garnett J."/>
            <person name="Fosker N."/>
            <person name="Hall R."/>
            <person name="Garner P."/>
            <person name="Kelly D."/>
            <person name="Bird C."/>
            <person name="Palmer S."/>
            <person name="Gehring I."/>
            <person name="Berger A."/>
            <person name="Dooley C.M."/>
            <person name="Ersan-Urun Z."/>
            <person name="Eser C."/>
            <person name="Geiger H."/>
            <person name="Geisler M."/>
            <person name="Karotki L."/>
            <person name="Kirn A."/>
            <person name="Konantz J."/>
            <person name="Konantz M."/>
            <person name="Oberlander M."/>
            <person name="Rudolph-Geiger S."/>
            <person name="Teucke M."/>
            <person name="Lanz C."/>
            <person name="Raddatz G."/>
            <person name="Osoegawa K."/>
            <person name="Zhu B."/>
            <person name="Rapp A."/>
            <person name="Widaa S."/>
            <person name="Langford C."/>
            <person name="Yang F."/>
            <person name="Schuster S.C."/>
            <person name="Carter N.P."/>
            <person name="Harrow J."/>
            <person name="Ning Z."/>
            <person name="Herrero J."/>
            <person name="Searle S.M."/>
            <person name="Enright A."/>
            <person name="Geisler R."/>
            <person name="Plasterk R.H."/>
            <person name="Lee C."/>
            <person name="Westerfield M."/>
            <person name="de Jong P.J."/>
            <person name="Zon L.I."/>
            <person name="Postlethwait J.H."/>
            <person name="Nusslein-Volhard C."/>
            <person name="Hubbard T.J."/>
            <person name="Roest Crollius H."/>
            <person name="Rogers J."/>
            <person name="Stemple D.L."/>
        </authorList>
    </citation>
    <scope>NUCLEOTIDE SEQUENCE [LARGE SCALE GENOMIC DNA]</scope>
    <source>
        <strain>Tuebingen</strain>
    </source>
</reference>
<reference key="2">
    <citation type="submission" date="2004-01" db="EMBL/GenBank/DDBJ databases">
        <authorList>
            <consortium name="NIH - Zebrafish Gene Collection (ZGC) project"/>
        </authorList>
    </citation>
    <scope>NUCLEOTIDE SEQUENCE [LARGE SCALE MRNA]</scope>
    <source>
        <tissue>Embryo</tissue>
    </source>
</reference>
<reference key="3">
    <citation type="journal article" date="2016" name="Hum. Mol. Genet.">
        <title>Altered RNA metabolism due to a homozygous RBM7 mutation in a patient with spinal motor neuropathy.</title>
        <authorList>
            <person name="Giunta M."/>
            <person name="Edvardson S."/>
            <person name="Xu Y."/>
            <person name="Schuelke M."/>
            <person name="Gomez-Duran A."/>
            <person name="Boczonadi V."/>
            <person name="Elpeleg O."/>
            <person name="Mueller J.S."/>
            <person name="Horvath R."/>
        </authorList>
    </citation>
    <scope>DISRUPTION PHENOTYPE</scope>
    <scope>FUNCTION</scope>
</reference>
<evidence type="ECO:0000250" key="1">
    <source>
        <dbReference type="UniProtKB" id="Q9CQT2"/>
    </source>
</evidence>
<evidence type="ECO:0000250" key="2">
    <source>
        <dbReference type="UniProtKB" id="Q9Y580"/>
    </source>
</evidence>
<evidence type="ECO:0000255" key="3">
    <source>
        <dbReference type="PROSITE-ProRule" id="PRU00176"/>
    </source>
</evidence>
<evidence type="ECO:0000256" key="4">
    <source>
        <dbReference type="SAM" id="MobiDB-lite"/>
    </source>
</evidence>
<evidence type="ECO:0000269" key="5">
    <source>
    </source>
</evidence>
<keyword id="KW-0539">Nucleus</keyword>
<keyword id="KW-1185">Reference proteome</keyword>
<keyword id="KW-0694">RNA-binding</keyword>
<proteinExistence type="evidence at transcript level"/>
<name>RBM7_DANRE</name>
<comment type="function">
    <text evidence="2">RNA-binding subunit of the trimeric nuclear exosome targeting (NEXT) complex, a complex that functions as an RNA exosome cofactor that directs a subset of non-coding short-lived RNAs for exosomal degradation. NEXT is involved in surveillance and turnover of aberrant transcripts and non-coding RNAs. Binds preferentially polyuridine sequences and associates with newly synthesized RNAs, including pre-mRNAs and short-lived exosome substrates such as promoter upstream transcripts (PROMPTs), enhancer RNAs (eRNAs), and 3'-extended products from small nuclear RNAs (snRNAs).</text>
</comment>
<comment type="subunit">
    <text evidence="2">Component of the nuclear exosome targeting (NEXT) complex composed of MTREX, ZCCHC8, and RBM7 that directs a subset of non-coding short-lived RNAs for exosomal degradation.</text>
</comment>
<comment type="subcellular location">
    <subcellularLocation>
        <location evidence="2">Nucleus</location>
        <location evidence="2">Nucleoplasm</location>
    </subcellularLocation>
    <subcellularLocation>
        <location evidence="1">Nucleus</location>
    </subcellularLocation>
    <text evidence="2">Excluded from the nucleolus.</text>
</comment>
<comment type="domain">
    <text evidence="2">The RRM domain mediates RNA binding; the RNA must have four nucleotides for efficient binding. Mediates the interaction of NEXT complex with promoter upstream transcripts (PROMPTs) and potentially aberrant forms of other non coding RNAs, such as snRNAs. The RRM domain exhibits specificity for polyuridine sequences.</text>
</comment>
<comment type="disruption phenotype">
    <text evidence="5">Morpholino knockdown of rbm7 causes several degrees of the severity in the phenotype. Mildly affected fish are unable to swim away normally upon touch stimulation. The body shape is slightly shorter and sporadically brain edema could be observed. The moderately affected fish have a curved body shape, smaller head and eyes. Heart and brain edema are frequently observed. In fish with severe phenotype the body shape is completely altered, the tail is absent, and the head and eyes are smaller.</text>
</comment>